<comment type="function">
    <text evidence="1">Catalyzes the isomerization between 2-isopropylmalate and 3-isopropylmalate, via the formation of 2-isopropylmaleate.</text>
</comment>
<comment type="catalytic activity">
    <reaction evidence="1">
        <text>(2R,3S)-3-isopropylmalate = (2S)-2-isopropylmalate</text>
        <dbReference type="Rhea" id="RHEA:32287"/>
        <dbReference type="ChEBI" id="CHEBI:1178"/>
        <dbReference type="ChEBI" id="CHEBI:35121"/>
        <dbReference type="EC" id="4.2.1.33"/>
    </reaction>
</comment>
<comment type="pathway">
    <text evidence="1">Amino-acid biosynthesis; L-leucine biosynthesis; L-leucine from 3-methyl-2-oxobutanoate: step 2/4.</text>
</comment>
<comment type="subunit">
    <text evidence="1">Heterodimer of LeuC and LeuD.</text>
</comment>
<comment type="similarity">
    <text evidence="1">Belongs to the LeuD family. LeuD type 1 subfamily.</text>
</comment>
<reference key="1">
    <citation type="journal article" date="2005" name="Proc. Natl. Acad. Sci. U.S.A.">
        <title>Complete genome sequence of Vibrio fischeri: a symbiotic bacterium with pathogenic congeners.</title>
        <authorList>
            <person name="Ruby E.G."/>
            <person name="Urbanowski M."/>
            <person name="Campbell J."/>
            <person name="Dunn A."/>
            <person name="Faini M."/>
            <person name="Gunsalus R."/>
            <person name="Lostroh P."/>
            <person name="Lupp C."/>
            <person name="McCann J."/>
            <person name="Millikan D."/>
            <person name="Schaefer A."/>
            <person name="Stabb E."/>
            <person name="Stevens A."/>
            <person name="Visick K."/>
            <person name="Whistler C."/>
            <person name="Greenberg E.P."/>
        </authorList>
    </citation>
    <scope>NUCLEOTIDE SEQUENCE [LARGE SCALE GENOMIC DNA]</scope>
    <source>
        <strain>ATCC 700601 / ES114</strain>
    </source>
</reference>
<evidence type="ECO:0000255" key="1">
    <source>
        <dbReference type="HAMAP-Rule" id="MF_01031"/>
    </source>
</evidence>
<organism>
    <name type="scientific">Aliivibrio fischeri (strain ATCC 700601 / ES114)</name>
    <name type="common">Vibrio fischeri</name>
    <dbReference type="NCBI Taxonomy" id="312309"/>
    <lineage>
        <taxon>Bacteria</taxon>
        <taxon>Pseudomonadati</taxon>
        <taxon>Pseudomonadota</taxon>
        <taxon>Gammaproteobacteria</taxon>
        <taxon>Vibrionales</taxon>
        <taxon>Vibrionaceae</taxon>
        <taxon>Aliivibrio</taxon>
    </lineage>
</organism>
<feature type="chain" id="PRO_0000141906" description="3-isopropylmalate dehydratase small subunit">
    <location>
        <begin position="1"/>
        <end position="200"/>
    </location>
</feature>
<keyword id="KW-0028">Amino-acid biosynthesis</keyword>
<keyword id="KW-0100">Branched-chain amino acid biosynthesis</keyword>
<keyword id="KW-0432">Leucine biosynthesis</keyword>
<keyword id="KW-0456">Lyase</keyword>
<keyword id="KW-1185">Reference proteome</keyword>
<proteinExistence type="inferred from homology"/>
<sequence>MSGFKQHTGLVVPLDTANIDTDAIIPKQFLQKVNRIGFGKHLFHDWRFLDDAGEQPNPEFVMNAPRYQGATVLLARENFGCGSSREHAPWSLADYGIQVMIAPSFADIFYGNSINNQMVPVRLTESEVDEIFQFVEANEGAEVTVDLEAMLVTANNKQYSFEIDEFRRHCLLNGLDNIGLTLQHADKISEYEAKIPSFLK</sequence>
<accession>Q5E859</accession>
<gene>
    <name evidence="1" type="primary">leuD</name>
    <name type="ordered locus">VF_0292</name>
</gene>
<name>LEUD_ALIF1</name>
<dbReference type="EC" id="4.2.1.33" evidence="1"/>
<dbReference type="EMBL" id="CP000020">
    <property type="protein sequence ID" value="AAW84787.1"/>
    <property type="molecule type" value="Genomic_DNA"/>
</dbReference>
<dbReference type="RefSeq" id="WP_011261102.1">
    <property type="nucleotide sequence ID" value="NC_006840.2"/>
</dbReference>
<dbReference type="RefSeq" id="YP_203675.1">
    <property type="nucleotide sequence ID" value="NC_006840.2"/>
</dbReference>
<dbReference type="SMR" id="Q5E859"/>
<dbReference type="STRING" id="312309.VF_0292"/>
<dbReference type="EnsemblBacteria" id="AAW84787">
    <property type="protein sequence ID" value="AAW84787"/>
    <property type="gene ID" value="VF_0292"/>
</dbReference>
<dbReference type="GeneID" id="54162912"/>
<dbReference type="KEGG" id="vfi:VF_0292"/>
<dbReference type="PATRIC" id="fig|312309.11.peg.286"/>
<dbReference type="eggNOG" id="COG0066">
    <property type="taxonomic scope" value="Bacteria"/>
</dbReference>
<dbReference type="HOGENOM" id="CLU_081378_0_3_6"/>
<dbReference type="OrthoDB" id="9777465at2"/>
<dbReference type="UniPathway" id="UPA00048">
    <property type="reaction ID" value="UER00071"/>
</dbReference>
<dbReference type="Proteomes" id="UP000000537">
    <property type="component" value="Chromosome I"/>
</dbReference>
<dbReference type="GO" id="GO:0009316">
    <property type="term" value="C:3-isopropylmalate dehydratase complex"/>
    <property type="evidence" value="ECO:0007669"/>
    <property type="project" value="InterPro"/>
</dbReference>
<dbReference type="GO" id="GO:0003861">
    <property type="term" value="F:3-isopropylmalate dehydratase activity"/>
    <property type="evidence" value="ECO:0007669"/>
    <property type="project" value="UniProtKB-UniRule"/>
</dbReference>
<dbReference type="GO" id="GO:0009098">
    <property type="term" value="P:L-leucine biosynthetic process"/>
    <property type="evidence" value="ECO:0007669"/>
    <property type="project" value="UniProtKB-UniRule"/>
</dbReference>
<dbReference type="CDD" id="cd01577">
    <property type="entry name" value="IPMI_Swivel"/>
    <property type="match status" value="1"/>
</dbReference>
<dbReference type="FunFam" id="3.20.19.10:FF:000003">
    <property type="entry name" value="3-isopropylmalate dehydratase small subunit"/>
    <property type="match status" value="1"/>
</dbReference>
<dbReference type="Gene3D" id="3.20.19.10">
    <property type="entry name" value="Aconitase, domain 4"/>
    <property type="match status" value="1"/>
</dbReference>
<dbReference type="HAMAP" id="MF_01031">
    <property type="entry name" value="LeuD_type1"/>
    <property type="match status" value="1"/>
</dbReference>
<dbReference type="InterPro" id="IPR004431">
    <property type="entry name" value="3-IsopropMal_deHydase_ssu"/>
</dbReference>
<dbReference type="InterPro" id="IPR015928">
    <property type="entry name" value="Aconitase/3IPM_dehydase_swvl"/>
</dbReference>
<dbReference type="InterPro" id="IPR000573">
    <property type="entry name" value="AconitaseA/IPMdHydase_ssu_swvl"/>
</dbReference>
<dbReference type="InterPro" id="IPR033940">
    <property type="entry name" value="IPMI_Swivel"/>
</dbReference>
<dbReference type="InterPro" id="IPR050075">
    <property type="entry name" value="LeuD"/>
</dbReference>
<dbReference type="NCBIfam" id="TIGR00171">
    <property type="entry name" value="leuD"/>
    <property type="match status" value="1"/>
</dbReference>
<dbReference type="NCBIfam" id="NF002458">
    <property type="entry name" value="PRK01641.1"/>
    <property type="match status" value="1"/>
</dbReference>
<dbReference type="PANTHER" id="PTHR43345:SF5">
    <property type="entry name" value="3-ISOPROPYLMALATE DEHYDRATASE SMALL SUBUNIT"/>
    <property type="match status" value="1"/>
</dbReference>
<dbReference type="PANTHER" id="PTHR43345">
    <property type="entry name" value="3-ISOPROPYLMALATE DEHYDRATASE SMALL SUBUNIT 2-RELATED-RELATED"/>
    <property type="match status" value="1"/>
</dbReference>
<dbReference type="Pfam" id="PF00694">
    <property type="entry name" value="Aconitase_C"/>
    <property type="match status" value="1"/>
</dbReference>
<dbReference type="SUPFAM" id="SSF52016">
    <property type="entry name" value="LeuD/IlvD-like"/>
    <property type="match status" value="1"/>
</dbReference>
<protein>
    <recommendedName>
        <fullName evidence="1">3-isopropylmalate dehydratase small subunit</fullName>
        <ecNumber evidence="1">4.2.1.33</ecNumber>
    </recommendedName>
    <alternativeName>
        <fullName evidence="1">Alpha-IPM isomerase</fullName>
        <shortName evidence="1">IPMI</shortName>
    </alternativeName>
    <alternativeName>
        <fullName evidence="1">Isopropylmalate isomerase</fullName>
    </alternativeName>
</protein>